<proteinExistence type="inferred from homology"/>
<gene>
    <name evidence="1" type="primary">glgC</name>
    <name type="ordered locus">Tlet_0282</name>
</gene>
<sequence length="420" mass="47023">MRKVLALILAGGHGKRLGVLTEKIAKPAVPFGGKYRLIDFTLSNCVNSGIYHVGVLTQYRPHLLNNHINIGRPWDLDRKKGGVTILPPYLGGVAGWYRGTANAVYQNIEYVDSADPDFVLILSGDHVYAMDYNDIIDFHILKGAEGTIACIEVPPEETNRFGIMMTDLDSRIVDFEEKPQRARSNLASLGIYVFNWKFLKEYLIRDEQNNESTHDFGHDIIPLMINEGCQIYAFKFNGYWRDVGTVRSYWESNLELTRPIPPLNLYDRHWRFFTQTEEMPPAYCAPTSKIVNSIISEGCEIYGFVENSVIFQGVYIGENAVVKNSVVMTSTKIGENCVITDAVIAERVIVENRVIIGEGDDAKNKLDSDVYTGQITVIGMYSVIPSGSVIGKNCVVGVGVEKGDFKTQKVESGDYILHKE</sequence>
<feature type="chain" id="PRO_1000061387" description="Glucose-1-phosphate adenylyltransferase">
    <location>
        <begin position="1"/>
        <end position="420"/>
    </location>
</feature>
<feature type="binding site" evidence="1">
    <location>
        <position position="97"/>
    </location>
    <ligand>
        <name>alpha-D-glucose 1-phosphate</name>
        <dbReference type="ChEBI" id="CHEBI:58601"/>
    </ligand>
</feature>
<feature type="binding site" evidence="1">
    <location>
        <position position="162"/>
    </location>
    <ligand>
        <name>alpha-D-glucose 1-phosphate</name>
        <dbReference type="ChEBI" id="CHEBI:58601"/>
    </ligand>
</feature>
<feature type="binding site" evidence="1">
    <location>
        <begin position="177"/>
        <end position="178"/>
    </location>
    <ligand>
        <name>alpha-D-glucose 1-phosphate</name>
        <dbReference type="ChEBI" id="CHEBI:58601"/>
    </ligand>
</feature>
<feature type="binding site" evidence="1">
    <location>
        <position position="188"/>
    </location>
    <ligand>
        <name>alpha-D-glucose 1-phosphate</name>
        <dbReference type="ChEBI" id="CHEBI:58601"/>
    </ligand>
</feature>
<name>GLGC_PSELT</name>
<protein>
    <recommendedName>
        <fullName evidence="1">Glucose-1-phosphate adenylyltransferase</fullName>
        <ecNumber evidence="1">2.7.7.27</ecNumber>
    </recommendedName>
    <alternativeName>
        <fullName evidence="1">ADP-glucose pyrophosphorylase</fullName>
        <shortName evidence="1">ADPGlc PPase</shortName>
    </alternativeName>
    <alternativeName>
        <fullName evidence="1">ADP-glucose synthase</fullName>
    </alternativeName>
</protein>
<organism>
    <name type="scientific">Pseudothermotoga lettingae (strain ATCC BAA-301 / DSM 14385 / NBRC 107922 / TMO)</name>
    <name type="common">Thermotoga lettingae</name>
    <dbReference type="NCBI Taxonomy" id="416591"/>
    <lineage>
        <taxon>Bacteria</taxon>
        <taxon>Thermotogati</taxon>
        <taxon>Thermotogota</taxon>
        <taxon>Thermotogae</taxon>
        <taxon>Thermotogales</taxon>
        <taxon>Thermotogaceae</taxon>
        <taxon>Pseudothermotoga</taxon>
    </lineage>
</organism>
<evidence type="ECO:0000255" key="1">
    <source>
        <dbReference type="HAMAP-Rule" id="MF_00624"/>
    </source>
</evidence>
<reference key="1">
    <citation type="submission" date="2007-08" db="EMBL/GenBank/DDBJ databases">
        <title>Complete sequence of Thermotoga lettingae TMO.</title>
        <authorList>
            <consortium name="US DOE Joint Genome Institute"/>
            <person name="Copeland A."/>
            <person name="Lucas S."/>
            <person name="Lapidus A."/>
            <person name="Barry K."/>
            <person name="Glavina del Rio T."/>
            <person name="Dalin E."/>
            <person name="Tice H."/>
            <person name="Pitluck S."/>
            <person name="Foster B."/>
            <person name="Bruce D."/>
            <person name="Schmutz J."/>
            <person name="Larimer F."/>
            <person name="Land M."/>
            <person name="Hauser L."/>
            <person name="Kyrpides N."/>
            <person name="Mikhailova N."/>
            <person name="Nelson K."/>
            <person name="Gogarten J.P."/>
            <person name="Noll K."/>
            <person name="Richardson P."/>
        </authorList>
    </citation>
    <scope>NUCLEOTIDE SEQUENCE [LARGE SCALE GENOMIC DNA]</scope>
    <source>
        <strain>ATCC BAA-301 / DSM 14385 / NBRC 107922 / TMO</strain>
    </source>
</reference>
<comment type="function">
    <text evidence="1">Involved in the biosynthesis of ADP-glucose, a building block required for the elongation reactions to produce glycogen. Catalyzes the reaction between ATP and alpha-D-glucose 1-phosphate (G1P) to produce pyrophosphate and ADP-Glc.</text>
</comment>
<comment type="catalytic activity">
    <reaction evidence="1">
        <text>alpha-D-glucose 1-phosphate + ATP + H(+) = ADP-alpha-D-glucose + diphosphate</text>
        <dbReference type="Rhea" id="RHEA:12120"/>
        <dbReference type="ChEBI" id="CHEBI:15378"/>
        <dbReference type="ChEBI" id="CHEBI:30616"/>
        <dbReference type="ChEBI" id="CHEBI:33019"/>
        <dbReference type="ChEBI" id="CHEBI:57498"/>
        <dbReference type="ChEBI" id="CHEBI:58601"/>
        <dbReference type="EC" id="2.7.7.27"/>
    </reaction>
</comment>
<comment type="pathway">
    <text evidence="1">Glycan biosynthesis; glycogen biosynthesis.</text>
</comment>
<comment type="subunit">
    <text evidence="1">Homotetramer.</text>
</comment>
<comment type="similarity">
    <text evidence="1">Belongs to the bacterial/plant glucose-1-phosphate adenylyltransferase family.</text>
</comment>
<dbReference type="EC" id="2.7.7.27" evidence="1"/>
<dbReference type="EMBL" id="CP000812">
    <property type="protein sequence ID" value="ABV32852.1"/>
    <property type="molecule type" value="Genomic_DNA"/>
</dbReference>
<dbReference type="RefSeq" id="WP_012002333.1">
    <property type="nucleotide sequence ID" value="NZ_BSDV01000001.1"/>
</dbReference>
<dbReference type="SMR" id="A8F3W8"/>
<dbReference type="STRING" id="416591.Tlet_0282"/>
<dbReference type="KEGG" id="tle:Tlet_0282"/>
<dbReference type="eggNOG" id="COG0448">
    <property type="taxonomic scope" value="Bacteria"/>
</dbReference>
<dbReference type="HOGENOM" id="CLU_029499_14_0_0"/>
<dbReference type="OrthoDB" id="9801810at2"/>
<dbReference type="UniPathway" id="UPA00164"/>
<dbReference type="Proteomes" id="UP000002016">
    <property type="component" value="Chromosome"/>
</dbReference>
<dbReference type="GO" id="GO:0005524">
    <property type="term" value="F:ATP binding"/>
    <property type="evidence" value="ECO:0007669"/>
    <property type="project" value="UniProtKB-KW"/>
</dbReference>
<dbReference type="GO" id="GO:0008878">
    <property type="term" value="F:glucose-1-phosphate adenylyltransferase activity"/>
    <property type="evidence" value="ECO:0007669"/>
    <property type="project" value="UniProtKB-UniRule"/>
</dbReference>
<dbReference type="GO" id="GO:0005978">
    <property type="term" value="P:glycogen biosynthetic process"/>
    <property type="evidence" value="ECO:0007669"/>
    <property type="project" value="UniProtKB-UniRule"/>
</dbReference>
<dbReference type="CDD" id="cd02508">
    <property type="entry name" value="ADP_Glucose_PP"/>
    <property type="match status" value="1"/>
</dbReference>
<dbReference type="CDD" id="cd04651">
    <property type="entry name" value="LbH_G1P_AT_C"/>
    <property type="match status" value="1"/>
</dbReference>
<dbReference type="Gene3D" id="2.160.10.10">
    <property type="entry name" value="Hexapeptide repeat proteins"/>
    <property type="match status" value="1"/>
</dbReference>
<dbReference type="Gene3D" id="3.90.550.10">
    <property type="entry name" value="Spore Coat Polysaccharide Biosynthesis Protein SpsA, Chain A"/>
    <property type="match status" value="1"/>
</dbReference>
<dbReference type="HAMAP" id="MF_00624">
    <property type="entry name" value="GlgC"/>
    <property type="match status" value="1"/>
</dbReference>
<dbReference type="InterPro" id="IPR011831">
    <property type="entry name" value="ADP-Glc_PPase"/>
</dbReference>
<dbReference type="InterPro" id="IPR005836">
    <property type="entry name" value="ADP_Glu_pyroP_CS"/>
</dbReference>
<dbReference type="InterPro" id="IPR023049">
    <property type="entry name" value="GlgC_bac"/>
</dbReference>
<dbReference type="InterPro" id="IPR056818">
    <property type="entry name" value="GlmU/GlgC-like_hexapep"/>
</dbReference>
<dbReference type="InterPro" id="IPR005835">
    <property type="entry name" value="NTP_transferase_dom"/>
</dbReference>
<dbReference type="InterPro" id="IPR029044">
    <property type="entry name" value="Nucleotide-diphossugar_trans"/>
</dbReference>
<dbReference type="InterPro" id="IPR011004">
    <property type="entry name" value="Trimer_LpxA-like_sf"/>
</dbReference>
<dbReference type="NCBIfam" id="TIGR02091">
    <property type="entry name" value="glgC"/>
    <property type="match status" value="1"/>
</dbReference>
<dbReference type="NCBIfam" id="NF003670">
    <property type="entry name" value="PRK05293.1"/>
    <property type="match status" value="1"/>
</dbReference>
<dbReference type="PANTHER" id="PTHR43523:SF2">
    <property type="entry name" value="GLUCOSE-1-PHOSPHATE ADENYLYLTRANSFERASE"/>
    <property type="match status" value="1"/>
</dbReference>
<dbReference type="PANTHER" id="PTHR43523">
    <property type="entry name" value="GLUCOSE-1-PHOSPHATE ADENYLYLTRANSFERASE-RELATED"/>
    <property type="match status" value="1"/>
</dbReference>
<dbReference type="Pfam" id="PF24894">
    <property type="entry name" value="Hexapep_GlmU"/>
    <property type="match status" value="1"/>
</dbReference>
<dbReference type="Pfam" id="PF00483">
    <property type="entry name" value="NTP_transferase"/>
    <property type="match status" value="1"/>
</dbReference>
<dbReference type="SUPFAM" id="SSF53448">
    <property type="entry name" value="Nucleotide-diphospho-sugar transferases"/>
    <property type="match status" value="1"/>
</dbReference>
<dbReference type="SUPFAM" id="SSF51161">
    <property type="entry name" value="Trimeric LpxA-like enzymes"/>
    <property type="match status" value="1"/>
</dbReference>
<dbReference type="PROSITE" id="PS00808">
    <property type="entry name" value="ADP_GLC_PYROPHOSPH_1"/>
    <property type="match status" value="1"/>
</dbReference>
<dbReference type="PROSITE" id="PS00809">
    <property type="entry name" value="ADP_GLC_PYROPHOSPH_2"/>
    <property type="match status" value="1"/>
</dbReference>
<accession>A8F3W8</accession>
<keyword id="KW-0067">ATP-binding</keyword>
<keyword id="KW-0119">Carbohydrate metabolism</keyword>
<keyword id="KW-0320">Glycogen biosynthesis</keyword>
<keyword id="KW-0321">Glycogen metabolism</keyword>
<keyword id="KW-0547">Nucleotide-binding</keyword>
<keyword id="KW-0548">Nucleotidyltransferase</keyword>
<keyword id="KW-1185">Reference proteome</keyword>
<keyword id="KW-0808">Transferase</keyword>